<sequence>MRTDSGVWLTVVAHMIVGVDEAGRGPLAGPVVAAAVLLCEGGIAGLDDSKKLSARRRGALESAIRAQCRWGIGEASVEEIDRINILQATFLAMTRAVEALGFEPAEVLVDGNRLPRWRYQARAIVGGDALHPCISAASILAKQHRDRLMIAAAQDYPAFGWESNMGYGTAQHLAALRRHGPTPHHRTSFAPVAQLQLV</sequence>
<evidence type="ECO:0000255" key="1">
    <source>
        <dbReference type="HAMAP-Rule" id="MF_00052"/>
    </source>
</evidence>
<evidence type="ECO:0000255" key="2">
    <source>
        <dbReference type="PROSITE-ProRule" id="PRU01319"/>
    </source>
</evidence>
<keyword id="KW-0963">Cytoplasm</keyword>
<keyword id="KW-0255">Endonuclease</keyword>
<keyword id="KW-0378">Hydrolase</keyword>
<keyword id="KW-0464">Manganese</keyword>
<keyword id="KW-0479">Metal-binding</keyword>
<keyword id="KW-0540">Nuclease</keyword>
<keyword id="KW-1185">Reference proteome</keyword>
<comment type="function">
    <text evidence="1">Endonuclease that specifically degrades the RNA of RNA-DNA hybrids.</text>
</comment>
<comment type="catalytic activity">
    <reaction evidence="1">
        <text>Endonucleolytic cleavage to 5'-phosphomonoester.</text>
        <dbReference type="EC" id="3.1.26.4"/>
    </reaction>
</comment>
<comment type="cofactor">
    <cofactor evidence="1">
        <name>Mn(2+)</name>
        <dbReference type="ChEBI" id="CHEBI:29035"/>
    </cofactor>
    <cofactor evidence="1">
        <name>Mg(2+)</name>
        <dbReference type="ChEBI" id="CHEBI:18420"/>
    </cofactor>
    <text evidence="1">Manganese or magnesium. Binds 1 divalent metal ion per monomer in the absence of substrate. May bind a second metal ion after substrate binding.</text>
</comment>
<comment type="subcellular location">
    <subcellularLocation>
        <location evidence="1">Cytoplasm</location>
    </subcellularLocation>
</comment>
<comment type="similarity">
    <text evidence="1">Belongs to the RNase HII family.</text>
</comment>
<protein>
    <recommendedName>
        <fullName evidence="1">Ribonuclease HII</fullName>
        <shortName evidence="1">RNase HII</shortName>
        <ecNumber evidence="1">3.1.26.4</ecNumber>
    </recommendedName>
</protein>
<accession>Q1GUJ1</accession>
<organism>
    <name type="scientific">Sphingopyxis alaskensis (strain DSM 13593 / LMG 18877 / RB2256)</name>
    <name type="common">Sphingomonas alaskensis</name>
    <dbReference type="NCBI Taxonomy" id="317655"/>
    <lineage>
        <taxon>Bacteria</taxon>
        <taxon>Pseudomonadati</taxon>
        <taxon>Pseudomonadota</taxon>
        <taxon>Alphaproteobacteria</taxon>
        <taxon>Sphingomonadales</taxon>
        <taxon>Sphingomonadaceae</taxon>
        <taxon>Sphingopyxis</taxon>
    </lineage>
</organism>
<gene>
    <name evidence="1" type="primary">rnhB</name>
    <name type="ordered locus">Sala_0963</name>
</gene>
<name>RNH2_SPHAL</name>
<reference key="1">
    <citation type="journal article" date="2009" name="Proc. Natl. Acad. Sci. U.S.A.">
        <title>The genomic basis of trophic strategy in marine bacteria.</title>
        <authorList>
            <person name="Lauro F.M."/>
            <person name="McDougald D."/>
            <person name="Thomas T."/>
            <person name="Williams T.J."/>
            <person name="Egan S."/>
            <person name="Rice S."/>
            <person name="DeMaere M.Z."/>
            <person name="Ting L."/>
            <person name="Ertan H."/>
            <person name="Johnson J."/>
            <person name="Ferriera S."/>
            <person name="Lapidus A."/>
            <person name="Anderson I."/>
            <person name="Kyrpides N."/>
            <person name="Munk A.C."/>
            <person name="Detter C."/>
            <person name="Han C.S."/>
            <person name="Brown M.V."/>
            <person name="Robb F.T."/>
            <person name="Kjelleberg S."/>
            <person name="Cavicchioli R."/>
        </authorList>
    </citation>
    <scope>NUCLEOTIDE SEQUENCE [LARGE SCALE GENOMIC DNA]</scope>
    <source>
        <strain>DSM 13593 / LMG 18877 / RB2256</strain>
    </source>
</reference>
<dbReference type="EC" id="3.1.26.4" evidence="1"/>
<dbReference type="EMBL" id="CP000356">
    <property type="protein sequence ID" value="ABF52681.1"/>
    <property type="molecule type" value="Genomic_DNA"/>
</dbReference>
<dbReference type="RefSeq" id="WP_011541269.1">
    <property type="nucleotide sequence ID" value="NC_008048.1"/>
</dbReference>
<dbReference type="SMR" id="Q1GUJ1"/>
<dbReference type="STRING" id="317655.Sala_0963"/>
<dbReference type="KEGG" id="sal:Sala_0963"/>
<dbReference type="eggNOG" id="COG0164">
    <property type="taxonomic scope" value="Bacteria"/>
</dbReference>
<dbReference type="HOGENOM" id="CLU_036532_3_2_5"/>
<dbReference type="OrthoDB" id="9803420at2"/>
<dbReference type="Proteomes" id="UP000006578">
    <property type="component" value="Chromosome"/>
</dbReference>
<dbReference type="GO" id="GO:0005737">
    <property type="term" value="C:cytoplasm"/>
    <property type="evidence" value="ECO:0007669"/>
    <property type="project" value="UniProtKB-SubCell"/>
</dbReference>
<dbReference type="GO" id="GO:0032299">
    <property type="term" value="C:ribonuclease H2 complex"/>
    <property type="evidence" value="ECO:0007669"/>
    <property type="project" value="TreeGrafter"/>
</dbReference>
<dbReference type="GO" id="GO:0030145">
    <property type="term" value="F:manganese ion binding"/>
    <property type="evidence" value="ECO:0007669"/>
    <property type="project" value="UniProtKB-UniRule"/>
</dbReference>
<dbReference type="GO" id="GO:0003723">
    <property type="term" value="F:RNA binding"/>
    <property type="evidence" value="ECO:0007669"/>
    <property type="project" value="InterPro"/>
</dbReference>
<dbReference type="GO" id="GO:0004523">
    <property type="term" value="F:RNA-DNA hybrid ribonuclease activity"/>
    <property type="evidence" value="ECO:0007669"/>
    <property type="project" value="UniProtKB-UniRule"/>
</dbReference>
<dbReference type="GO" id="GO:0043137">
    <property type="term" value="P:DNA replication, removal of RNA primer"/>
    <property type="evidence" value="ECO:0007669"/>
    <property type="project" value="TreeGrafter"/>
</dbReference>
<dbReference type="GO" id="GO:0006298">
    <property type="term" value="P:mismatch repair"/>
    <property type="evidence" value="ECO:0007669"/>
    <property type="project" value="TreeGrafter"/>
</dbReference>
<dbReference type="CDD" id="cd07182">
    <property type="entry name" value="RNase_HII_bacteria_HII_like"/>
    <property type="match status" value="1"/>
</dbReference>
<dbReference type="Gene3D" id="3.30.420.10">
    <property type="entry name" value="Ribonuclease H-like superfamily/Ribonuclease H"/>
    <property type="match status" value="1"/>
</dbReference>
<dbReference type="HAMAP" id="MF_00052_B">
    <property type="entry name" value="RNase_HII_B"/>
    <property type="match status" value="1"/>
</dbReference>
<dbReference type="InterPro" id="IPR022898">
    <property type="entry name" value="RNase_HII"/>
</dbReference>
<dbReference type="InterPro" id="IPR001352">
    <property type="entry name" value="RNase_HII/HIII"/>
</dbReference>
<dbReference type="InterPro" id="IPR024567">
    <property type="entry name" value="RNase_HII/HIII_dom"/>
</dbReference>
<dbReference type="InterPro" id="IPR012337">
    <property type="entry name" value="RNaseH-like_sf"/>
</dbReference>
<dbReference type="InterPro" id="IPR036397">
    <property type="entry name" value="RNaseH_sf"/>
</dbReference>
<dbReference type="NCBIfam" id="NF000595">
    <property type="entry name" value="PRK00015.1-3"/>
    <property type="match status" value="1"/>
</dbReference>
<dbReference type="PANTHER" id="PTHR10954">
    <property type="entry name" value="RIBONUCLEASE H2 SUBUNIT A"/>
    <property type="match status" value="1"/>
</dbReference>
<dbReference type="PANTHER" id="PTHR10954:SF18">
    <property type="entry name" value="RIBONUCLEASE HII"/>
    <property type="match status" value="1"/>
</dbReference>
<dbReference type="Pfam" id="PF01351">
    <property type="entry name" value="RNase_HII"/>
    <property type="match status" value="1"/>
</dbReference>
<dbReference type="SUPFAM" id="SSF53098">
    <property type="entry name" value="Ribonuclease H-like"/>
    <property type="match status" value="1"/>
</dbReference>
<dbReference type="PROSITE" id="PS51975">
    <property type="entry name" value="RNASE_H_2"/>
    <property type="match status" value="1"/>
</dbReference>
<feature type="chain" id="PRO_0000334960" description="Ribonuclease HII">
    <location>
        <begin position="1"/>
        <end position="198"/>
    </location>
</feature>
<feature type="domain" description="RNase H type-2" evidence="2">
    <location>
        <begin position="14"/>
        <end position="198"/>
    </location>
</feature>
<feature type="binding site" evidence="1">
    <location>
        <position position="20"/>
    </location>
    <ligand>
        <name>a divalent metal cation</name>
        <dbReference type="ChEBI" id="CHEBI:60240"/>
    </ligand>
</feature>
<feature type="binding site" evidence="1">
    <location>
        <position position="21"/>
    </location>
    <ligand>
        <name>a divalent metal cation</name>
        <dbReference type="ChEBI" id="CHEBI:60240"/>
    </ligand>
</feature>
<feature type="binding site" evidence="1">
    <location>
        <position position="110"/>
    </location>
    <ligand>
        <name>a divalent metal cation</name>
        <dbReference type="ChEBI" id="CHEBI:60240"/>
    </ligand>
</feature>
<proteinExistence type="inferred from homology"/>